<sequence>MKEIIKLSILGKDSIHIGLHLWPHITNELFTCIFSPTYVIITDSNIETLYIPSFKTYFISMAKQRSINSRLLFFTIPPGEKSKSRKTKALIEDWLLSEKCTRDTVIIAIGGGVIGDLVGYVSATFMRGVRFIQIPTTLLAMVDSSIGGKNSINTSYGKNAIGTIWQPERIFIDFTFLETLTEKEFINGIAELIKTIIIWDESEFASLENISEKIAKTVRSMSLTSNKHSKFNEIIKDLKRYIISSIKIKAHIVSIDEKEKDLRTLLNFGHSIGHAIETVLAPYILHGESISIGMVKEAELSRHLGILNPNVVSRLIKCLNTWGLPTSFKDRRFKEVILGKKHLIEDILEIMSIDKKNDSNNKKIVLLSAIGKTYEKKASSVSDDDIRTILSQNILLYGIPLNAFQKHTTITLPGSKSISNRALILASLSNGICYLKNFLHSDDTYYMLSALEKLNAAEFKWEQDGDVLVVKGKSGYLENPQMELYLGNSGTTARFLTSICTLVQPNSRENHLILTGSNRMKQRPIGPLVDALKNNGCCIEYLELENCLPLLIKPKEIGLYGGNINLSATVSSQYVSSILMCSPYAKTQVTLSLIGGKPISQPYIDMTISMMSSFGIKVTRSHSKENTYYIPKGCYTCPSEYIIEGDATSATYPLAIAAITGGSCTISNVGSASLQGDSKFSEYILKPMGCEVVQSPTTTYIKGPPKGKLKSLGSINMESMTDTFLTAAVLASVAYEESKPYVTKITGISNQRIKECNRINAMVCELKKFGIEAGELPDGIYVKALNTSNLPYSVEGINCYNDHRIAMSFSVLACISSKPTTILDKACVNKTWPYWWDILNSTFKVQMKGIEFDLNPTINSSILHHPSECTIFLIGMRGAGKTTLGQLAANFLGREFIDLDSIIEEDIKTTILEFIQKYSWDVFRRKELHFLKTLLTEKKENYIISCGGGIIETEEARDLLISYIEANGIVIHIHRNIQDIIKYLNTDKTRAPYQDNIMHVWERRKRWYNLCSSHQFHMTSTDPTEFKKNIPLNLKSSFNNFLRTITGKNNIFSLILKKKRSYFLSLAFSDLENIFSLLDIITAGCDAIEIRIDLFQKPEEIDKYPSLEYIAEKIFLLRQKTSLPLIYTLRTTNHGGSFLSSEKKLAKEYILHGAKWGFEFLDIELDIASELFKTINNSWPYTKIIASYHNIEKPISCDDFEWIQKYKEAQHYGHIIKLVGTSSSIEDNFFLEEFKSKFINKKVPSIIINTGIKGQLSRIMNTFMTPVTHPSLPSKIAPGQLSIKEINTALHIMGLLPEKKYFLFGKPIKHSQSPNIHNLGFEILGLPYKYQLFETDSISELKEILHLEEFGGASVTIPLKTNISILLDEISDHAALIGSVNTITRTYNNGQYILKGENTDWQGIIKAIKNFNKFEKSFENFSGFIIGAGGASRAAIYALLSLGISPIYLINRSKDKLNKLYHFFNTNHIIPITEYHELNNINFDIRIGISTIPTDNPIDPSVLEIAKIFFNLKRKSSEGIFLDMAYGSNTTDLTIIAKACNWKIIHGLEILLEQGSEQFLLWTETYIPYNQVKYAILGPNK</sequence>
<evidence type="ECO:0000255" key="1">
    <source>
        <dbReference type="HAMAP-Rule" id="MF_03143"/>
    </source>
</evidence>
<gene>
    <name type="primary">arom</name>
</gene>
<protein>
    <recommendedName>
        <fullName evidence="1">Pentafunctional AROM polypeptide</fullName>
    </recommendedName>
    <domain>
        <recommendedName>
            <fullName evidence="1">3-dehydroquinate synthase</fullName>
            <shortName evidence="1">DHQS</shortName>
            <ecNumber evidence="1">4.2.3.4</ecNumber>
        </recommendedName>
    </domain>
    <domain>
        <recommendedName>
            <fullName evidence="1">3-phosphoshikimate 1-carboxyvinyltransferase</fullName>
            <ecNumber evidence="1">2.5.1.19</ecNumber>
        </recommendedName>
        <alternativeName>
            <fullName evidence="1">5-enolpyruvylshikimate-3-phosphate synthase</fullName>
            <shortName evidence="1">EPSP synthase</shortName>
            <shortName evidence="1">EPSPS</shortName>
        </alternativeName>
    </domain>
    <domain>
        <recommendedName>
            <fullName evidence="1">Shikimate kinase</fullName>
            <shortName evidence="1">SK</shortName>
            <ecNumber evidence="1">2.7.1.71</ecNumber>
        </recommendedName>
    </domain>
    <domain>
        <recommendedName>
            <fullName evidence="1">3-dehydroquinate dehydratase</fullName>
            <shortName evidence="1">3-dehydroquinase</shortName>
            <ecNumber evidence="1">4.2.1.10</ecNumber>
        </recommendedName>
    </domain>
    <domain>
        <recommendedName>
            <fullName evidence="1">Shikimate dehydrogenase</fullName>
            <ecNumber evidence="1">1.1.1.25</ecNumber>
        </recommendedName>
    </domain>
</protein>
<organism>
    <name type="scientific">Pneumocystis carinii</name>
    <dbReference type="NCBI Taxonomy" id="4754"/>
    <lineage>
        <taxon>Eukaryota</taxon>
        <taxon>Fungi</taxon>
        <taxon>Dikarya</taxon>
        <taxon>Ascomycota</taxon>
        <taxon>Taphrinomycotina</taxon>
        <taxon>Pneumocystomycetes</taxon>
        <taxon>Pneumocystaceae</taxon>
        <taxon>Pneumocystis</taxon>
    </lineage>
</organism>
<accession>Q12659</accession>
<reference key="1">
    <citation type="journal article" date="1993" name="J. Gen. Microbiol.">
        <title>The cloning and characterization of the arom gene of Pneumocystis carinii.</title>
        <authorList>
            <person name="Banerji S."/>
            <person name="Wakefield A.E."/>
            <person name="Allen A.G."/>
            <person name="Maskell D.J."/>
            <person name="Peters S.E."/>
            <person name="Hopkin J.M."/>
        </authorList>
    </citation>
    <scope>NUCLEOTIDE SEQUENCE [GENOMIC DNA]</scope>
</reference>
<proteinExistence type="inferred from homology"/>
<name>ARO1_PNECA</name>
<keyword id="KW-0028">Amino-acid biosynthesis</keyword>
<keyword id="KW-0057">Aromatic amino acid biosynthesis</keyword>
<keyword id="KW-0067">ATP-binding</keyword>
<keyword id="KW-0963">Cytoplasm</keyword>
<keyword id="KW-0418">Kinase</keyword>
<keyword id="KW-0456">Lyase</keyword>
<keyword id="KW-0479">Metal-binding</keyword>
<keyword id="KW-0511">Multifunctional enzyme</keyword>
<keyword id="KW-0521">NADP</keyword>
<keyword id="KW-0547">Nucleotide-binding</keyword>
<keyword id="KW-0560">Oxidoreductase</keyword>
<keyword id="KW-0808">Transferase</keyword>
<keyword id="KW-0862">Zinc</keyword>
<comment type="function">
    <text>The AROM polypeptide catalyzes 5 consecutive enzymatic reactions in prechorismate polyaromatic amino acid biosynthesis.</text>
</comment>
<comment type="catalytic activity">
    <reaction evidence="1">
        <text>7-phospho-2-dehydro-3-deoxy-D-arabino-heptonate = 3-dehydroquinate + phosphate</text>
        <dbReference type="Rhea" id="RHEA:21968"/>
        <dbReference type="ChEBI" id="CHEBI:32364"/>
        <dbReference type="ChEBI" id="CHEBI:43474"/>
        <dbReference type="ChEBI" id="CHEBI:58394"/>
        <dbReference type="EC" id="4.2.3.4"/>
    </reaction>
</comment>
<comment type="catalytic activity">
    <reaction evidence="1">
        <text>3-dehydroquinate = 3-dehydroshikimate + H2O</text>
        <dbReference type="Rhea" id="RHEA:21096"/>
        <dbReference type="ChEBI" id="CHEBI:15377"/>
        <dbReference type="ChEBI" id="CHEBI:16630"/>
        <dbReference type="ChEBI" id="CHEBI:32364"/>
        <dbReference type="EC" id="4.2.1.10"/>
    </reaction>
</comment>
<comment type="catalytic activity">
    <reaction evidence="1">
        <text>shikimate + NADP(+) = 3-dehydroshikimate + NADPH + H(+)</text>
        <dbReference type="Rhea" id="RHEA:17737"/>
        <dbReference type="ChEBI" id="CHEBI:15378"/>
        <dbReference type="ChEBI" id="CHEBI:16630"/>
        <dbReference type="ChEBI" id="CHEBI:36208"/>
        <dbReference type="ChEBI" id="CHEBI:57783"/>
        <dbReference type="ChEBI" id="CHEBI:58349"/>
        <dbReference type="EC" id="1.1.1.25"/>
    </reaction>
</comment>
<comment type="catalytic activity">
    <reaction evidence="1">
        <text>shikimate + ATP = 3-phosphoshikimate + ADP + H(+)</text>
        <dbReference type="Rhea" id="RHEA:13121"/>
        <dbReference type="ChEBI" id="CHEBI:15378"/>
        <dbReference type="ChEBI" id="CHEBI:30616"/>
        <dbReference type="ChEBI" id="CHEBI:36208"/>
        <dbReference type="ChEBI" id="CHEBI:145989"/>
        <dbReference type="ChEBI" id="CHEBI:456216"/>
        <dbReference type="EC" id="2.7.1.71"/>
    </reaction>
</comment>
<comment type="catalytic activity">
    <reaction evidence="1">
        <text>3-phosphoshikimate + phosphoenolpyruvate = 5-O-(1-carboxyvinyl)-3-phosphoshikimate + phosphate</text>
        <dbReference type="Rhea" id="RHEA:21256"/>
        <dbReference type="ChEBI" id="CHEBI:43474"/>
        <dbReference type="ChEBI" id="CHEBI:57701"/>
        <dbReference type="ChEBI" id="CHEBI:58702"/>
        <dbReference type="ChEBI" id="CHEBI:145989"/>
        <dbReference type="EC" id="2.5.1.19"/>
    </reaction>
</comment>
<comment type="cofactor">
    <cofactor evidence="1">
        <name>Zn(2+)</name>
        <dbReference type="ChEBI" id="CHEBI:29105"/>
    </cofactor>
    <text evidence="1">Binds 2 Zn(2+) ions per subunit.</text>
</comment>
<comment type="pathway">
    <text evidence="1">Metabolic intermediate biosynthesis; chorismate biosynthesis; chorismate from D-erythrose 4-phosphate and phosphoenolpyruvate: step 2/7.</text>
</comment>
<comment type="pathway">
    <text evidence="1">Metabolic intermediate biosynthesis; chorismate biosynthesis; chorismate from D-erythrose 4-phosphate and phosphoenolpyruvate: step 3/7.</text>
</comment>
<comment type="pathway">
    <text evidence="1">Metabolic intermediate biosynthesis; chorismate biosynthesis; chorismate from D-erythrose 4-phosphate and phosphoenolpyruvate: step 4/7.</text>
</comment>
<comment type="pathway">
    <text evidence="1">Metabolic intermediate biosynthesis; chorismate biosynthesis; chorismate from D-erythrose 4-phosphate and phosphoenolpyruvate: step 5/7.</text>
</comment>
<comment type="pathway">
    <text evidence="1">Metabolic intermediate biosynthesis; chorismate biosynthesis; chorismate from D-erythrose 4-phosphate and phosphoenolpyruvate: step 6/7.</text>
</comment>
<comment type="subunit">
    <text evidence="1">Homodimer.</text>
</comment>
<comment type="subcellular location">
    <subcellularLocation>
        <location>Cytoplasm</location>
    </subcellularLocation>
</comment>
<comment type="similarity">
    <text evidence="1">In the N-terminal section; belongs to the sugar phosphate cyclases superfamily. Dehydroquinate synthase family.</text>
</comment>
<comment type="similarity">
    <text evidence="1">In the 2nd section; belongs to the EPSP synthase family.</text>
</comment>
<comment type="similarity">
    <text evidence="1">In the 3rd section; belongs to the shikimate kinase family.</text>
</comment>
<comment type="similarity">
    <text evidence="1">In the 4th section; belongs to the type-I 3-dehydroquinase family.</text>
</comment>
<comment type="similarity">
    <text evidence="1">In the C-terminal section; belongs to the shikimate dehydrogenase family.</text>
</comment>
<dbReference type="EC" id="4.2.3.4" evidence="1"/>
<dbReference type="EC" id="2.5.1.19" evidence="1"/>
<dbReference type="EC" id="2.7.1.71" evidence="1"/>
<dbReference type="EC" id="4.2.1.10" evidence="1"/>
<dbReference type="EC" id="1.1.1.25" evidence="1"/>
<dbReference type="EMBL" id="L18918">
    <property type="protein sequence ID" value="AAA17839.1"/>
    <property type="molecule type" value="Unassigned_DNA"/>
</dbReference>
<dbReference type="PIR" id="T30832">
    <property type="entry name" value="T30832"/>
</dbReference>
<dbReference type="SMR" id="Q12659"/>
<dbReference type="VEuPathDB" id="FungiDB:T552_02909"/>
<dbReference type="UniPathway" id="UPA00053">
    <property type="reaction ID" value="UER00085"/>
</dbReference>
<dbReference type="UniPathway" id="UPA00053">
    <property type="reaction ID" value="UER00086"/>
</dbReference>
<dbReference type="UniPathway" id="UPA00053">
    <property type="reaction ID" value="UER00087"/>
</dbReference>
<dbReference type="UniPathway" id="UPA00053">
    <property type="reaction ID" value="UER00088"/>
</dbReference>
<dbReference type="UniPathway" id="UPA00053">
    <property type="reaction ID" value="UER00089"/>
</dbReference>
<dbReference type="GO" id="GO:0005737">
    <property type="term" value="C:cytoplasm"/>
    <property type="evidence" value="ECO:0007669"/>
    <property type="project" value="UniProtKB-SubCell"/>
</dbReference>
<dbReference type="GO" id="GO:0003855">
    <property type="term" value="F:3-dehydroquinate dehydratase activity"/>
    <property type="evidence" value="ECO:0007669"/>
    <property type="project" value="UniProtKB-UniRule"/>
</dbReference>
<dbReference type="GO" id="GO:0003856">
    <property type="term" value="F:3-dehydroquinate synthase activity"/>
    <property type="evidence" value="ECO:0007669"/>
    <property type="project" value="UniProtKB-UniRule"/>
</dbReference>
<dbReference type="GO" id="GO:0003866">
    <property type="term" value="F:3-phosphoshikimate 1-carboxyvinyltransferase activity"/>
    <property type="evidence" value="ECO:0007669"/>
    <property type="project" value="UniProtKB-UniRule"/>
</dbReference>
<dbReference type="GO" id="GO:0005524">
    <property type="term" value="F:ATP binding"/>
    <property type="evidence" value="ECO:0007669"/>
    <property type="project" value="UniProtKB-UniRule"/>
</dbReference>
<dbReference type="GO" id="GO:0046872">
    <property type="term" value="F:metal ion binding"/>
    <property type="evidence" value="ECO:0007669"/>
    <property type="project" value="UniProtKB-UniRule"/>
</dbReference>
<dbReference type="GO" id="GO:0004764">
    <property type="term" value="F:shikimate 3-dehydrogenase (NADP+) activity"/>
    <property type="evidence" value="ECO:0007669"/>
    <property type="project" value="UniProtKB-UniRule"/>
</dbReference>
<dbReference type="GO" id="GO:0004765">
    <property type="term" value="F:shikimate kinase activity"/>
    <property type="evidence" value="ECO:0007669"/>
    <property type="project" value="UniProtKB-UniRule"/>
</dbReference>
<dbReference type="GO" id="GO:0008652">
    <property type="term" value="P:amino acid biosynthetic process"/>
    <property type="evidence" value="ECO:0007669"/>
    <property type="project" value="UniProtKB-KW"/>
</dbReference>
<dbReference type="GO" id="GO:0009073">
    <property type="term" value="P:aromatic amino acid family biosynthetic process"/>
    <property type="evidence" value="ECO:0007669"/>
    <property type="project" value="UniProtKB-UniRule"/>
</dbReference>
<dbReference type="GO" id="GO:0009423">
    <property type="term" value="P:chorismate biosynthetic process"/>
    <property type="evidence" value="ECO:0007669"/>
    <property type="project" value="UniProtKB-UniRule"/>
</dbReference>
<dbReference type="CDD" id="cd00502">
    <property type="entry name" value="DHQase_I"/>
    <property type="match status" value="1"/>
</dbReference>
<dbReference type="CDD" id="cd08195">
    <property type="entry name" value="DHQS"/>
    <property type="match status" value="1"/>
</dbReference>
<dbReference type="CDD" id="cd01556">
    <property type="entry name" value="EPSP_synthase"/>
    <property type="match status" value="1"/>
</dbReference>
<dbReference type="CDD" id="cd01065">
    <property type="entry name" value="NAD_bind_Shikimate_DH"/>
    <property type="match status" value="1"/>
</dbReference>
<dbReference type="CDD" id="cd00464">
    <property type="entry name" value="SK"/>
    <property type="match status" value="1"/>
</dbReference>
<dbReference type="FunFam" id="3.20.20.70:FF:000135">
    <property type="entry name" value="Pentafunctional AROM polypeptide"/>
    <property type="match status" value="1"/>
</dbReference>
<dbReference type="FunFam" id="3.40.50.1970:FF:000007">
    <property type="entry name" value="Pentafunctional AROM polypeptide"/>
    <property type="match status" value="1"/>
</dbReference>
<dbReference type="FunFam" id="3.40.50.300:FF:001256">
    <property type="entry name" value="Pentafunctional AROM polypeptide"/>
    <property type="match status" value="1"/>
</dbReference>
<dbReference type="FunFam" id="3.65.10.10:FF:000007">
    <property type="entry name" value="Pentafunctional AROM polypeptide"/>
    <property type="match status" value="1"/>
</dbReference>
<dbReference type="Gene3D" id="3.40.50.1970">
    <property type="match status" value="1"/>
</dbReference>
<dbReference type="Gene3D" id="3.20.20.70">
    <property type="entry name" value="Aldolase class I"/>
    <property type="match status" value="1"/>
</dbReference>
<dbReference type="Gene3D" id="1.20.1090.10">
    <property type="entry name" value="Dehydroquinate synthase-like - alpha domain"/>
    <property type="match status" value="1"/>
</dbReference>
<dbReference type="Gene3D" id="3.65.10.10">
    <property type="entry name" value="Enolpyruvate transferase domain"/>
    <property type="match status" value="2"/>
</dbReference>
<dbReference type="Gene3D" id="3.40.50.10860">
    <property type="entry name" value="Leucine Dehydrogenase, chain A, domain 1"/>
    <property type="match status" value="1"/>
</dbReference>
<dbReference type="Gene3D" id="3.40.50.720">
    <property type="entry name" value="NAD(P)-binding Rossmann-like Domain"/>
    <property type="match status" value="1"/>
</dbReference>
<dbReference type="Gene3D" id="3.40.50.300">
    <property type="entry name" value="P-loop containing nucleotide triphosphate hydrolases"/>
    <property type="match status" value="1"/>
</dbReference>
<dbReference type="HAMAP" id="MF_00210">
    <property type="entry name" value="EPSP_synth"/>
    <property type="match status" value="1"/>
</dbReference>
<dbReference type="HAMAP" id="MF_03143">
    <property type="entry name" value="Pentafunct_AroM"/>
    <property type="match status" value="1"/>
</dbReference>
<dbReference type="HAMAP" id="MF_00109">
    <property type="entry name" value="Shikimate_kinase"/>
    <property type="match status" value="1"/>
</dbReference>
<dbReference type="InterPro" id="IPR018508">
    <property type="entry name" value="3-dehydroquinate_DH_AS"/>
</dbReference>
<dbReference type="InterPro" id="IPR013785">
    <property type="entry name" value="Aldolase_TIM"/>
</dbReference>
<dbReference type="InterPro" id="IPR046346">
    <property type="entry name" value="Aminoacid_DH-like_N_sf"/>
</dbReference>
<dbReference type="InterPro" id="IPR016037">
    <property type="entry name" value="DHQ_synth_AroB"/>
</dbReference>
<dbReference type="InterPro" id="IPR030960">
    <property type="entry name" value="DHQS/DOIS_N"/>
</dbReference>
<dbReference type="InterPro" id="IPR056179">
    <property type="entry name" value="DHQS_C"/>
</dbReference>
<dbReference type="InterPro" id="IPR001381">
    <property type="entry name" value="DHquinase_I"/>
</dbReference>
<dbReference type="InterPro" id="IPR001986">
    <property type="entry name" value="Enolpyruvate_Tfrase_dom"/>
</dbReference>
<dbReference type="InterPro" id="IPR036968">
    <property type="entry name" value="Enolpyruvate_Tfrase_sf"/>
</dbReference>
<dbReference type="InterPro" id="IPR006264">
    <property type="entry name" value="EPSP_synthase"/>
</dbReference>
<dbReference type="InterPro" id="IPR023193">
    <property type="entry name" value="EPSP_synthase_CS"/>
</dbReference>
<dbReference type="InterPro" id="IPR036291">
    <property type="entry name" value="NAD(P)-bd_dom_sf"/>
</dbReference>
<dbReference type="InterPro" id="IPR027417">
    <property type="entry name" value="P-loop_NTPase"/>
</dbReference>
<dbReference type="InterPro" id="IPR008289">
    <property type="entry name" value="Pentafunct_AroM"/>
</dbReference>
<dbReference type="InterPro" id="IPR013792">
    <property type="entry name" value="RNA3'P_cycl/enolpyr_Trfase_a/b"/>
</dbReference>
<dbReference type="InterPro" id="IPR031322">
    <property type="entry name" value="Shikimate/glucono_kinase"/>
</dbReference>
<dbReference type="InterPro" id="IPR013708">
    <property type="entry name" value="Shikimate_DH-bd_N"/>
</dbReference>
<dbReference type="InterPro" id="IPR010110">
    <property type="entry name" value="Shikimate_DH_AroM-type"/>
</dbReference>
<dbReference type="InterPro" id="IPR000623">
    <property type="entry name" value="Shikimate_kinase/TSH1"/>
</dbReference>
<dbReference type="InterPro" id="IPR023000">
    <property type="entry name" value="Shikimate_kinase_CS"/>
</dbReference>
<dbReference type="NCBIfam" id="TIGR01356">
    <property type="entry name" value="aroA"/>
    <property type="match status" value="1"/>
</dbReference>
<dbReference type="NCBIfam" id="TIGR01357">
    <property type="entry name" value="aroB"/>
    <property type="match status" value="1"/>
</dbReference>
<dbReference type="NCBIfam" id="TIGR01093">
    <property type="entry name" value="aroD"/>
    <property type="match status" value="1"/>
</dbReference>
<dbReference type="NCBIfam" id="TIGR01809">
    <property type="entry name" value="Shik-DH-AROM"/>
    <property type="match status" value="1"/>
</dbReference>
<dbReference type="PANTHER" id="PTHR21090">
    <property type="entry name" value="AROM/DEHYDROQUINATE SYNTHASE"/>
    <property type="match status" value="1"/>
</dbReference>
<dbReference type="PANTHER" id="PTHR21090:SF5">
    <property type="entry name" value="PENTAFUNCTIONAL AROM POLYPEPTIDE"/>
    <property type="match status" value="1"/>
</dbReference>
<dbReference type="Pfam" id="PF01761">
    <property type="entry name" value="DHQ_synthase"/>
    <property type="match status" value="1"/>
</dbReference>
<dbReference type="Pfam" id="PF24621">
    <property type="entry name" value="DHQS_C"/>
    <property type="match status" value="1"/>
</dbReference>
<dbReference type="Pfam" id="PF01487">
    <property type="entry name" value="DHquinase_I"/>
    <property type="match status" value="1"/>
</dbReference>
<dbReference type="Pfam" id="PF00275">
    <property type="entry name" value="EPSP_synthase"/>
    <property type="match status" value="1"/>
</dbReference>
<dbReference type="Pfam" id="PF08501">
    <property type="entry name" value="Shikimate_dh_N"/>
    <property type="match status" value="1"/>
</dbReference>
<dbReference type="Pfam" id="PF01202">
    <property type="entry name" value="SKI"/>
    <property type="match status" value="1"/>
</dbReference>
<dbReference type="PIRSF" id="PIRSF000514">
    <property type="entry name" value="Pentafunct_AroM"/>
    <property type="match status" value="1"/>
</dbReference>
<dbReference type="PRINTS" id="PR01100">
    <property type="entry name" value="SHIKIMTKNASE"/>
</dbReference>
<dbReference type="SUPFAM" id="SSF51569">
    <property type="entry name" value="Aldolase"/>
    <property type="match status" value="1"/>
</dbReference>
<dbReference type="SUPFAM" id="SSF53223">
    <property type="entry name" value="Aminoacid dehydrogenase-like, N-terminal domain"/>
    <property type="match status" value="1"/>
</dbReference>
<dbReference type="SUPFAM" id="SSF56796">
    <property type="entry name" value="Dehydroquinate synthase-like"/>
    <property type="match status" value="1"/>
</dbReference>
<dbReference type="SUPFAM" id="SSF55205">
    <property type="entry name" value="EPT/RTPC-like"/>
    <property type="match status" value="1"/>
</dbReference>
<dbReference type="SUPFAM" id="SSF51735">
    <property type="entry name" value="NAD(P)-binding Rossmann-fold domains"/>
    <property type="match status" value="1"/>
</dbReference>
<dbReference type="SUPFAM" id="SSF52540">
    <property type="entry name" value="P-loop containing nucleoside triphosphate hydrolases"/>
    <property type="match status" value="1"/>
</dbReference>
<dbReference type="PROSITE" id="PS01028">
    <property type="entry name" value="DEHYDROQUINASE_I"/>
    <property type="match status" value="1"/>
</dbReference>
<dbReference type="PROSITE" id="PS00104">
    <property type="entry name" value="EPSP_SYNTHASE_1"/>
    <property type="match status" value="1"/>
</dbReference>
<dbReference type="PROSITE" id="PS00885">
    <property type="entry name" value="EPSP_SYNTHASE_2"/>
    <property type="match status" value="1"/>
</dbReference>
<dbReference type="PROSITE" id="PS01128">
    <property type="entry name" value="SHIKIMATE_KINASE"/>
    <property type="match status" value="1"/>
</dbReference>
<feature type="chain" id="PRO_0000140860" description="Pentafunctional AROM polypeptide">
    <location>
        <begin position="1"/>
        <end position="1581"/>
    </location>
</feature>
<feature type="region of interest" description="3-dehydroquinate synthase">
    <location>
        <begin position="1"/>
        <end position="383"/>
    </location>
</feature>
<feature type="region of interest" description="EPSP synthase">
    <location>
        <begin position="396"/>
        <end position="845"/>
    </location>
</feature>
<feature type="region of interest" description="Shikimate kinase">
    <location>
        <begin position="868"/>
        <end position="1065"/>
    </location>
</feature>
<feature type="region of interest" description="3-dehydroquinase">
    <location>
        <begin position="1066"/>
        <end position="1285"/>
    </location>
</feature>
<feature type="region of interest" description="Shikimate dehydrogenase">
    <location>
        <begin position="1298"/>
        <end position="1581"/>
    </location>
</feature>
<feature type="active site" description="Proton acceptor; for 3-dehydroquinate synthase activity" evidence="1">
    <location>
        <position position="259"/>
    </location>
</feature>
<feature type="active site" description="Proton acceptor; for 3-dehydroquinate synthase activity" evidence="1">
    <location>
        <position position="274"/>
    </location>
</feature>
<feature type="active site" description="For EPSP synthase activity" evidence="1">
    <location>
        <position position="827"/>
    </location>
</feature>
<feature type="active site" description="Proton acceptor; for 3-dehydroquinate dehydratase activity" evidence="1">
    <location>
        <position position="1189"/>
    </location>
</feature>
<feature type="active site" description="Schiff-base intermediate with substrate; for 3-dehydroquinate dehydratase activity" evidence="1">
    <location>
        <position position="1217"/>
    </location>
</feature>
<feature type="binding site" evidence="1">
    <location>
        <begin position="43"/>
        <end position="45"/>
    </location>
    <ligand>
        <name>NAD(+)</name>
        <dbReference type="ChEBI" id="CHEBI:57540"/>
    </ligand>
</feature>
<feature type="binding site" evidence="1">
    <location>
        <begin position="80"/>
        <end position="83"/>
    </location>
    <ligand>
        <name>NAD(+)</name>
        <dbReference type="ChEBI" id="CHEBI:57540"/>
    </ligand>
</feature>
<feature type="binding site" evidence="1">
    <location>
        <begin position="111"/>
        <end position="113"/>
    </location>
    <ligand>
        <name>NAD(+)</name>
        <dbReference type="ChEBI" id="CHEBI:57540"/>
    </ligand>
</feature>
<feature type="binding site" evidence="1">
    <location>
        <position position="116"/>
    </location>
    <ligand>
        <name>NAD(+)</name>
        <dbReference type="ChEBI" id="CHEBI:57540"/>
    </ligand>
</feature>
<feature type="binding site" evidence="1">
    <location>
        <position position="127"/>
    </location>
    <ligand>
        <name>7-phospho-2-dehydro-3-deoxy-D-arabino-heptonate</name>
        <dbReference type="ChEBI" id="CHEBI:58394"/>
    </ligand>
</feature>
<feature type="binding site" evidence="1">
    <location>
        <begin position="136"/>
        <end position="137"/>
    </location>
    <ligand>
        <name>NAD(+)</name>
        <dbReference type="ChEBI" id="CHEBI:57540"/>
    </ligand>
</feature>
<feature type="binding site" evidence="1">
    <location>
        <position position="143"/>
    </location>
    <ligand>
        <name>7-phospho-2-dehydro-3-deoxy-D-arabino-heptonate</name>
        <dbReference type="ChEBI" id="CHEBI:58394"/>
    </ligand>
</feature>
<feature type="binding site" evidence="1">
    <location>
        <position position="149"/>
    </location>
    <ligand>
        <name>7-phospho-2-dehydro-3-deoxy-D-arabino-heptonate</name>
        <dbReference type="ChEBI" id="CHEBI:58394"/>
    </ligand>
</feature>
<feature type="binding site" evidence="1">
    <location>
        <position position="158"/>
    </location>
    <ligand>
        <name>NAD(+)</name>
        <dbReference type="ChEBI" id="CHEBI:57540"/>
    </ligand>
</feature>
<feature type="binding site" evidence="1">
    <location>
        <position position="159"/>
    </location>
    <ligand>
        <name>7-phospho-2-dehydro-3-deoxy-D-arabino-heptonate</name>
        <dbReference type="ChEBI" id="CHEBI:58394"/>
    </ligand>
</feature>
<feature type="binding site" evidence="1">
    <location>
        <begin position="176"/>
        <end position="179"/>
    </location>
    <ligand>
        <name>NAD(+)</name>
        <dbReference type="ChEBI" id="CHEBI:57540"/>
    </ligand>
</feature>
<feature type="binding site" evidence="1">
    <location>
        <position position="187"/>
    </location>
    <ligand>
        <name>NAD(+)</name>
        <dbReference type="ChEBI" id="CHEBI:57540"/>
    </ligand>
</feature>
<feature type="binding site" evidence="1">
    <location>
        <begin position="191"/>
        <end position="194"/>
    </location>
    <ligand>
        <name>7-phospho-2-dehydro-3-deoxy-D-arabino-heptonate</name>
        <dbReference type="ChEBI" id="CHEBI:58394"/>
    </ligand>
</feature>
<feature type="binding site" evidence="1">
    <location>
        <position position="191"/>
    </location>
    <ligand>
        <name>Zn(2+)</name>
        <dbReference type="ChEBI" id="CHEBI:29105"/>
        <note>catalytic</note>
    </ligand>
</feature>
<feature type="binding site" evidence="1">
    <location>
        <position position="249"/>
    </location>
    <ligand>
        <name>7-phospho-2-dehydro-3-deoxy-D-arabino-heptonate</name>
        <dbReference type="ChEBI" id="CHEBI:58394"/>
    </ligand>
</feature>
<feature type="binding site" evidence="1">
    <location>
        <begin position="263"/>
        <end position="267"/>
    </location>
    <ligand>
        <name>7-phospho-2-dehydro-3-deoxy-D-arabino-heptonate</name>
        <dbReference type="ChEBI" id="CHEBI:58394"/>
    </ligand>
</feature>
<feature type="binding site" evidence="1">
    <location>
        <position position="270"/>
    </location>
    <ligand>
        <name>7-phospho-2-dehydro-3-deoxy-D-arabino-heptonate</name>
        <dbReference type="ChEBI" id="CHEBI:58394"/>
    </ligand>
</feature>
<feature type="binding site" evidence="1">
    <location>
        <position position="270"/>
    </location>
    <ligand>
        <name>Zn(2+)</name>
        <dbReference type="ChEBI" id="CHEBI:29105"/>
        <note>catalytic</note>
    </ligand>
</feature>
<feature type="binding site" evidence="1">
    <location>
        <position position="286"/>
    </location>
    <ligand>
        <name>7-phospho-2-dehydro-3-deoxy-D-arabino-heptonate</name>
        <dbReference type="ChEBI" id="CHEBI:58394"/>
    </ligand>
</feature>
<feature type="binding site" evidence="1">
    <location>
        <position position="286"/>
    </location>
    <ligand>
        <name>Zn(2+)</name>
        <dbReference type="ChEBI" id="CHEBI:29105"/>
        <note>catalytic</note>
    </ligand>
</feature>
<feature type="binding site" evidence="1">
    <location>
        <position position="355"/>
    </location>
    <ligand>
        <name>7-phospho-2-dehydro-3-deoxy-D-arabino-heptonate</name>
        <dbReference type="ChEBI" id="CHEBI:58394"/>
    </ligand>
</feature>
<feature type="binding site" evidence="1">
    <location>
        <begin position="875"/>
        <end position="882"/>
    </location>
    <ligand>
        <name>ATP</name>
        <dbReference type="ChEBI" id="CHEBI:30616"/>
    </ligand>
</feature>